<name>PURA_HELPH</name>
<comment type="function">
    <text evidence="1">Plays an important role in the de novo pathway of purine nucleotide biosynthesis. Catalyzes the first committed step in the biosynthesis of AMP from IMP.</text>
</comment>
<comment type="catalytic activity">
    <reaction evidence="1">
        <text>IMP + L-aspartate + GTP = N(6)-(1,2-dicarboxyethyl)-AMP + GDP + phosphate + 2 H(+)</text>
        <dbReference type="Rhea" id="RHEA:15753"/>
        <dbReference type="ChEBI" id="CHEBI:15378"/>
        <dbReference type="ChEBI" id="CHEBI:29991"/>
        <dbReference type="ChEBI" id="CHEBI:37565"/>
        <dbReference type="ChEBI" id="CHEBI:43474"/>
        <dbReference type="ChEBI" id="CHEBI:57567"/>
        <dbReference type="ChEBI" id="CHEBI:58053"/>
        <dbReference type="ChEBI" id="CHEBI:58189"/>
        <dbReference type="EC" id="6.3.4.4"/>
    </reaction>
</comment>
<comment type="cofactor">
    <cofactor evidence="1">
        <name>Mg(2+)</name>
        <dbReference type="ChEBI" id="CHEBI:18420"/>
    </cofactor>
    <text evidence="1">Binds 1 Mg(2+) ion per subunit.</text>
</comment>
<comment type="pathway">
    <text evidence="1">Purine metabolism; AMP biosynthesis via de novo pathway; AMP from IMP: step 1/2.</text>
</comment>
<comment type="subunit">
    <text evidence="1">Homodimer.</text>
</comment>
<comment type="subcellular location">
    <subcellularLocation>
        <location evidence="1">Cytoplasm</location>
    </subcellularLocation>
</comment>
<comment type="similarity">
    <text evidence="1">Belongs to the adenylosuccinate synthetase family.</text>
</comment>
<dbReference type="EC" id="6.3.4.4" evidence="1"/>
<dbReference type="EMBL" id="CP000241">
    <property type="protein sequence ID" value="ABF84324.1"/>
    <property type="molecule type" value="Genomic_DNA"/>
</dbReference>
<dbReference type="RefSeq" id="WP_000796121.1">
    <property type="nucleotide sequence ID" value="NC_008086.1"/>
</dbReference>
<dbReference type="SMR" id="Q1CUP8"/>
<dbReference type="KEGG" id="hpa:HPAG1_0257"/>
<dbReference type="HOGENOM" id="CLU_029848_0_0_7"/>
<dbReference type="UniPathway" id="UPA00075">
    <property type="reaction ID" value="UER00335"/>
</dbReference>
<dbReference type="GO" id="GO:0005737">
    <property type="term" value="C:cytoplasm"/>
    <property type="evidence" value="ECO:0007669"/>
    <property type="project" value="UniProtKB-SubCell"/>
</dbReference>
<dbReference type="GO" id="GO:0004019">
    <property type="term" value="F:adenylosuccinate synthase activity"/>
    <property type="evidence" value="ECO:0007669"/>
    <property type="project" value="UniProtKB-UniRule"/>
</dbReference>
<dbReference type="GO" id="GO:0005525">
    <property type="term" value="F:GTP binding"/>
    <property type="evidence" value="ECO:0007669"/>
    <property type="project" value="UniProtKB-UniRule"/>
</dbReference>
<dbReference type="GO" id="GO:0000287">
    <property type="term" value="F:magnesium ion binding"/>
    <property type="evidence" value="ECO:0007669"/>
    <property type="project" value="UniProtKB-UniRule"/>
</dbReference>
<dbReference type="GO" id="GO:0044208">
    <property type="term" value="P:'de novo' AMP biosynthetic process"/>
    <property type="evidence" value="ECO:0007669"/>
    <property type="project" value="UniProtKB-UniRule"/>
</dbReference>
<dbReference type="GO" id="GO:0046040">
    <property type="term" value="P:IMP metabolic process"/>
    <property type="evidence" value="ECO:0007669"/>
    <property type="project" value="TreeGrafter"/>
</dbReference>
<dbReference type="CDD" id="cd03108">
    <property type="entry name" value="AdSS"/>
    <property type="match status" value="1"/>
</dbReference>
<dbReference type="FunFam" id="1.10.300.10:FF:000001">
    <property type="entry name" value="Adenylosuccinate synthetase"/>
    <property type="match status" value="1"/>
</dbReference>
<dbReference type="FunFam" id="3.90.170.10:FF:000004">
    <property type="entry name" value="Adenylosuccinate synthetase"/>
    <property type="match status" value="1"/>
</dbReference>
<dbReference type="Gene3D" id="3.40.440.10">
    <property type="entry name" value="Adenylosuccinate Synthetase, subunit A, domain 1"/>
    <property type="match status" value="1"/>
</dbReference>
<dbReference type="Gene3D" id="1.10.300.10">
    <property type="entry name" value="Adenylosuccinate Synthetase, subunit A, domain 2"/>
    <property type="match status" value="1"/>
</dbReference>
<dbReference type="Gene3D" id="3.90.170.10">
    <property type="entry name" value="Adenylosuccinate Synthetase, subunit A, domain 3"/>
    <property type="match status" value="1"/>
</dbReference>
<dbReference type="HAMAP" id="MF_00011">
    <property type="entry name" value="Adenylosucc_synth"/>
    <property type="match status" value="1"/>
</dbReference>
<dbReference type="InterPro" id="IPR018220">
    <property type="entry name" value="Adenylosuccin_syn_GTP-bd"/>
</dbReference>
<dbReference type="InterPro" id="IPR033128">
    <property type="entry name" value="Adenylosuccin_syn_Lys_AS"/>
</dbReference>
<dbReference type="InterPro" id="IPR042109">
    <property type="entry name" value="Adenylosuccinate_synth_dom1"/>
</dbReference>
<dbReference type="InterPro" id="IPR042110">
    <property type="entry name" value="Adenylosuccinate_synth_dom2"/>
</dbReference>
<dbReference type="InterPro" id="IPR042111">
    <property type="entry name" value="Adenylosuccinate_synth_dom3"/>
</dbReference>
<dbReference type="InterPro" id="IPR001114">
    <property type="entry name" value="Adenylosuccinate_synthetase"/>
</dbReference>
<dbReference type="InterPro" id="IPR027417">
    <property type="entry name" value="P-loop_NTPase"/>
</dbReference>
<dbReference type="NCBIfam" id="NF002223">
    <property type="entry name" value="PRK01117.1"/>
    <property type="match status" value="1"/>
</dbReference>
<dbReference type="NCBIfam" id="TIGR00184">
    <property type="entry name" value="purA"/>
    <property type="match status" value="1"/>
</dbReference>
<dbReference type="PANTHER" id="PTHR11846">
    <property type="entry name" value="ADENYLOSUCCINATE SYNTHETASE"/>
    <property type="match status" value="1"/>
</dbReference>
<dbReference type="PANTHER" id="PTHR11846:SF0">
    <property type="entry name" value="ADENYLOSUCCINATE SYNTHETASE"/>
    <property type="match status" value="1"/>
</dbReference>
<dbReference type="Pfam" id="PF00709">
    <property type="entry name" value="Adenylsucc_synt"/>
    <property type="match status" value="1"/>
</dbReference>
<dbReference type="SMART" id="SM00788">
    <property type="entry name" value="Adenylsucc_synt"/>
    <property type="match status" value="1"/>
</dbReference>
<dbReference type="SUPFAM" id="SSF52540">
    <property type="entry name" value="P-loop containing nucleoside triphosphate hydrolases"/>
    <property type="match status" value="1"/>
</dbReference>
<dbReference type="PROSITE" id="PS01266">
    <property type="entry name" value="ADENYLOSUCCIN_SYN_1"/>
    <property type="match status" value="1"/>
</dbReference>
<dbReference type="PROSITE" id="PS00513">
    <property type="entry name" value="ADENYLOSUCCIN_SYN_2"/>
    <property type="match status" value="1"/>
</dbReference>
<sequence>MADVVVGIQWGDEGKGKIVDRIAKDYDFVVRYQGGHNAGHTIVHKGVKHSLHLMPSGVLYPKCKNIISSAVVVSIKDLCEEISAFEDLENRLFISDRAHVILPYHAKKDAFKEKSQNIGTTKKGIGPCYEDKMARSGIRMGDLLDDTILEEKLNAHFKAIEPFKEAYDLGEDYEKDLREYFKQYTPKIRPFIKDTTSMLIEANQKGAKILLEGAQGTLLDIDLGTYPFVTSSNTTSASACVSTGLNPKAINEVIGITKAYSTRVGNGPFPSEDATPMGDHLRTKGAEFGTTTKRPRRCGWLDLVALKYACALNGCTQLALMKLDVLDGIDAIKVCVAYERKGERLEAFPSDLKDCVPVYQTFKGWEKSVGVRKLDDLEPNAREYIRFIEKEVGVKIRLISTSPEREDTIFL</sequence>
<proteinExistence type="inferred from homology"/>
<feature type="chain" id="PRO_1000000837" description="Adenylosuccinate synthetase">
    <location>
        <begin position="1"/>
        <end position="411"/>
    </location>
</feature>
<feature type="active site" description="Proton acceptor" evidence="1">
    <location>
        <position position="12"/>
    </location>
</feature>
<feature type="active site" description="Proton donor" evidence="1">
    <location>
        <position position="40"/>
    </location>
</feature>
<feature type="binding site" evidence="1">
    <location>
        <begin position="11"/>
        <end position="17"/>
    </location>
    <ligand>
        <name>GTP</name>
        <dbReference type="ChEBI" id="CHEBI:37565"/>
    </ligand>
</feature>
<feature type="binding site" description="in other chain" evidence="1">
    <location>
        <begin position="12"/>
        <end position="15"/>
    </location>
    <ligand>
        <name>IMP</name>
        <dbReference type="ChEBI" id="CHEBI:58053"/>
        <note>ligand shared between dimeric partners</note>
    </ligand>
</feature>
<feature type="binding site" evidence="1">
    <location>
        <position position="12"/>
    </location>
    <ligand>
        <name>Mg(2+)</name>
        <dbReference type="ChEBI" id="CHEBI:18420"/>
    </ligand>
</feature>
<feature type="binding site" description="in other chain" evidence="1">
    <location>
        <begin position="37"/>
        <end position="40"/>
    </location>
    <ligand>
        <name>IMP</name>
        <dbReference type="ChEBI" id="CHEBI:58053"/>
        <note>ligand shared between dimeric partners</note>
    </ligand>
</feature>
<feature type="binding site" evidence="1">
    <location>
        <begin position="39"/>
        <end position="41"/>
    </location>
    <ligand>
        <name>GTP</name>
        <dbReference type="ChEBI" id="CHEBI:37565"/>
    </ligand>
</feature>
<feature type="binding site" evidence="1">
    <location>
        <position position="39"/>
    </location>
    <ligand>
        <name>Mg(2+)</name>
        <dbReference type="ChEBI" id="CHEBI:18420"/>
    </ligand>
</feature>
<feature type="binding site" description="in other chain" evidence="1">
    <location>
        <position position="121"/>
    </location>
    <ligand>
        <name>IMP</name>
        <dbReference type="ChEBI" id="CHEBI:58053"/>
        <note>ligand shared between dimeric partners</note>
    </ligand>
</feature>
<feature type="binding site" evidence="1">
    <location>
        <position position="135"/>
    </location>
    <ligand>
        <name>IMP</name>
        <dbReference type="ChEBI" id="CHEBI:58053"/>
        <note>ligand shared between dimeric partners</note>
    </ligand>
</feature>
<feature type="binding site" description="in other chain" evidence="1">
    <location>
        <position position="215"/>
    </location>
    <ligand>
        <name>IMP</name>
        <dbReference type="ChEBI" id="CHEBI:58053"/>
        <note>ligand shared between dimeric partners</note>
    </ligand>
</feature>
<feature type="binding site" description="in other chain" evidence="1">
    <location>
        <position position="230"/>
    </location>
    <ligand>
        <name>IMP</name>
        <dbReference type="ChEBI" id="CHEBI:58053"/>
        <note>ligand shared between dimeric partners</note>
    </ligand>
</feature>
<feature type="binding site" evidence="1">
    <location>
        <begin position="290"/>
        <end position="296"/>
    </location>
    <ligand>
        <name>substrate</name>
    </ligand>
</feature>
<feature type="binding site" description="in other chain" evidence="1">
    <location>
        <position position="294"/>
    </location>
    <ligand>
        <name>IMP</name>
        <dbReference type="ChEBI" id="CHEBI:58053"/>
        <note>ligand shared between dimeric partners</note>
    </ligand>
</feature>
<feature type="binding site" evidence="1">
    <location>
        <position position="296"/>
    </location>
    <ligand>
        <name>GTP</name>
        <dbReference type="ChEBI" id="CHEBI:37565"/>
    </ligand>
</feature>
<feature type="binding site" evidence="1">
    <location>
        <begin position="322"/>
        <end position="324"/>
    </location>
    <ligand>
        <name>GTP</name>
        <dbReference type="ChEBI" id="CHEBI:37565"/>
    </ligand>
</feature>
<feature type="binding site" evidence="1">
    <location>
        <begin position="400"/>
        <end position="402"/>
    </location>
    <ligand>
        <name>GTP</name>
        <dbReference type="ChEBI" id="CHEBI:37565"/>
    </ligand>
</feature>
<evidence type="ECO:0000255" key="1">
    <source>
        <dbReference type="HAMAP-Rule" id="MF_00011"/>
    </source>
</evidence>
<keyword id="KW-0963">Cytoplasm</keyword>
<keyword id="KW-0342">GTP-binding</keyword>
<keyword id="KW-0436">Ligase</keyword>
<keyword id="KW-0460">Magnesium</keyword>
<keyword id="KW-0479">Metal-binding</keyword>
<keyword id="KW-0547">Nucleotide-binding</keyword>
<keyword id="KW-0658">Purine biosynthesis</keyword>
<gene>
    <name evidence="1" type="primary">purA</name>
    <name type="ordered locus">HPAG1_0257</name>
</gene>
<reference key="1">
    <citation type="journal article" date="2006" name="Proc. Natl. Acad. Sci. U.S.A.">
        <title>The complete genome sequence of a chronic atrophic gastritis Helicobacter pylori strain: evolution during disease progression.</title>
        <authorList>
            <person name="Oh J.D."/>
            <person name="Kling-Baeckhed H."/>
            <person name="Giannakis M."/>
            <person name="Xu J."/>
            <person name="Fulton R.S."/>
            <person name="Fulton L.A."/>
            <person name="Cordum H.S."/>
            <person name="Wang C."/>
            <person name="Elliott G."/>
            <person name="Edwards J."/>
            <person name="Mardis E.R."/>
            <person name="Engstrand L.G."/>
            <person name="Gordon J.I."/>
        </authorList>
    </citation>
    <scope>NUCLEOTIDE SEQUENCE [LARGE SCALE GENOMIC DNA]</scope>
    <source>
        <strain>HPAG1</strain>
    </source>
</reference>
<accession>Q1CUP8</accession>
<organism>
    <name type="scientific">Helicobacter pylori (strain HPAG1)</name>
    <dbReference type="NCBI Taxonomy" id="357544"/>
    <lineage>
        <taxon>Bacteria</taxon>
        <taxon>Pseudomonadati</taxon>
        <taxon>Campylobacterota</taxon>
        <taxon>Epsilonproteobacteria</taxon>
        <taxon>Campylobacterales</taxon>
        <taxon>Helicobacteraceae</taxon>
        <taxon>Helicobacter</taxon>
    </lineage>
</organism>
<protein>
    <recommendedName>
        <fullName evidence="1">Adenylosuccinate synthetase</fullName>
        <shortName evidence="1">AMPSase</shortName>
        <shortName evidence="1">AdSS</shortName>
        <ecNumber evidence="1">6.3.4.4</ecNumber>
    </recommendedName>
    <alternativeName>
        <fullName evidence="1">IMP--aspartate ligase</fullName>
    </alternativeName>
</protein>